<organism>
    <name type="scientific">Streptococcus pneumoniae serotype 2 (strain D39 / NCTC 7466)</name>
    <dbReference type="NCBI Taxonomy" id="373153"/>
    <lineage>
        <taxon>Bacteria</taxon>
        <taxon>Bacillati</taxon>
        <taxon>Bacillota</taxon>
        <taxon>Bacilli</taxon>
        <taxon>Lactobacillales</taxon>
        <taxon>Streptococcaceae</taxon>
        <taxon>Streptococcus</taxon>
    </lineage>
</organism>
<dbReference type="EMBL" id="CP000410">
    <property type="protein sequence ID" value="ABJ53656.1"/>
    <property type="molecule type" value="Genomic_DNA"/>
</dbReference>
<dbReference type="RefSeq" id="WP_000065990.1">
    <property type="nucleotide sequence ID" value="NZ_JAMLJR010000005.1"/>
</dbReference>
<dbReference type="SMR" id="Q04JX5"/>
<dbReference type="PaxDb" id="373153-SPD_1206"/>
<dbReference type="KEGG" id="spd:SPD_1206"/>
<dbReference type="eggNOG" id="COG3679">
    <property type="taxonomic scope" value="Bacteria"/>
</dbReference>
<dbReference type="HOGENOM" id="CLU_140243_2_0_9"/>
<dbReference type="BioCyc" id="SPNE373153:G1G6V-1304-MONOMER"/>
<dbReference type="Proteomes" id="UP000001452">
    <property type="component" value="Chromosome"/>
</dbReference>
<dbReference type="Gene3D" id="1.20.1500.10">
    <property type="entry name" value="YheA/YmcA-like"/>
    <property type="match status" value="1"/>
</dbReference>
<dbReference type="HAMAP" id="MF_01526">
    <property type="entry name" value="UPF0342"/>
    <property type="match status" value="1"/>
</dbReference>
<dbReference type="InterPro" id="IPR010368">
    <property type="entry name" value="Com_YlbF"/>
</dbReference>
<dbReference type="InterPro" id="IPR023378">
    <property type="entry name" value="YheA/YmcA-like_dom_sf"/>
</dbReference>
<dbReference type="NCBIfam" id="NF010209">
    <property type="entry name" value="PRK13676.1-1"/>
    <property type="match status" value="1"/>
</dbReference>
<dbReference type="Pfam" id="PF06133">
    <property type="entry name" value="Com_YlbF"/>
    <property type="match status" value="1"/>
</dbReference>
<dbReference type="SUPFAM" id="SSF158622">
    <property type="entry name" value="YheA/YmcA-like"/>
    <property type="match status" value="1"/>
</dbReference>
<accession>Q04JX5</accession>
<protein>
    <recommendedName>
        <fullName evidence="1">UPF0342 protein SPD_1206</fullName>
    </recommendedName>
</protein>
<feature type="chain" id="PRO_0000292746" description="UPF0342 protein SPD_1206">
    <location>
        <begin position="1"/>
        <end position="112"/>
    </location>
</feature>
<name>Y1206_STRP2</name>
<gene>
    <name type="ordered locus">SPD_1206</name>
</gene>
<reference key="1">
    <citation type="journal article" date="2007" name="J. Bacteriol.">
        <title>Genome sequence of Avery's virulent serotype 2 strain D39 of Streptococcus pneumoniae and comparison with that of unencapsulated laboratory strain R6.</title>
        <authorList>
            <person name="Lanie J.A."/>
            <person name="Ng W.-L."/>
            <person name="Kazmierczak K.M."/>
            <person name="Andrzejewski T.M."/>
            <person name="Davidsen T.M."/>
            <person name="Wayne K.J."/>
            <person name="Tettelin H."/>
            <person name="Glass J.I."/>
            <person name="Winkler M.E."/>
        </authorList>
    </citation>
    <scope>NUCLEOTIDE SEQUENCE [LARGE SCALE GENOMIC DNA]</scope>
    <source>
        <strain>D39 / NCTC 7466</strain>
    </source>
</reference>
<sequence>MSNIYDSANELSRGLRGLPEYKAVKAAKDAIAADAEASKIFTEYLAFQEEIQKLAQTGQMPDASFQAKMEGFGKQIQGNSLLSEFFTKQQQLAIYLSDIEKIVFEPVSELLK</sequence>
<keyword id="KW-1185">Reference proteome</keyword>
<comment type="similarity">
    <text evidence="1">Belongs to the UPF0342 family.</text>
</comment>
<evidence type="ECO:0000255" key="1">
    <source>
        <dbReference type="HAMAP-Rule" id="MF_01526"/>
    </source>
</evidence>
<proteinExistence type="inferred from homology"/>